<comment type="subunit">
    <text evidence="1">Part of the 50S ribosomal subunit.</text>
</comment>
<comment type="similarity">
    <text evidence="1">Belongs to the bacterial ribosomal protein bL31 family. Type B subfamily.</text>
</comment>
<dbReference type="EMBL" id="BX842646">
    <property type="protein sequence ID" value="CAE77748.1"/>
    <property type="molecule type" value="Genomic_DNA"/>
</dbReference>
<dbReference type="RefSeq" id="WP_011162689.1">
    <property type="nucleotide sequence ID" value="NC_005363.1"/>
</dbReference>
<dbReference type="SMR" id="Q6MRL0"/>
<dbReference type="STRING" id="264462.Bd0068"/>
<dbReference type="GeneID" id="93011219"/>
<dbReference type="KEGG" id="bba:Bd0068"/>
<dbReference type="eggNOG" id="COG0254">
    <property type="taxonomic scope" value="Bacteria"/>
</dbReference>
<dbReference type="HOGENOM" id="CLU_114306_2_2_7"/>
<dbReference type="Proteomes" id="UP000008080">
    <property type="component" value="Chromosome"/>
</dbReference>
<dbReference type="GO" id="GO:1990904">
    <property type="term" value="C:ribonucleoprotein complex"/>
    <property type="evidence" value="ECO:0007669"/>
    <property type="project" value="UniProtKB-KW"/>
</dbReference>
<dbReference type="GO" id="GO:0005840">
    <property type="term" value="C:ribosome"/>
    <property type="evidence" value="ECO:0007669"/>
    <property type="project" value="UniProtKB-KW"/>
</dbReference>
<dbReference type="GO" id="GO:0003735">
    <property type="term" value="F:structural constituent of ribosome"/>
    <property type="evidence" value="ECO:0007669"/>
    <property type="project" value="InterPro"/>
</dbReference>
<dbReference type="GO" id="GO:0006412">
    <property type="term" value="P:translation"/>
    <property type="evidence" value="ECO:0007669"/>
    <property type="project" value="UniProtKB-UniRule"/>
</dbReference>
<dbReference type="Gene3D" id="4.10.830.30">
    <property type="entry name" value="Ribosomal protein L31"/>
    <property type="match status" value="1"/>
</dbReference>
<dbReference type="HAMAP" id="MF_00502">
    <property type="entry name" value="Ribosomal_bL31_2"/>
    <property type="match status" value="1"/>
</dbReference>
<dbReference type="InterPro" id="IPR034704">
    <property type="entry name" value="Ribosomal_bL28/bL31-like_sf"/>
</dbReference>
<dbReference type="InterPro" id="IPR002150">
    <property type="entry name" value="Ribosomal_bL31"/>
</dbReference>
<dbReference type="InterPro" id="IPR027493">
    <property type="entry name" value="Ribosomal_bL31_B"/>
</dbReference>
<dbReference type="InterPro" id="IPR042105">
    <property type="entry name" value="Ribosomal_bL31_sf"/>
</dbReference>
<dbReference type="NCBIfam" id="TIGR00105">
    <property type="entry name" value="L31"/>
    <property type="match status" value="1"/>
</dbReference>
<dbReference type="NCBIfam" id="NF002462">
    <property type="entry name" value="PRK01678.1"/>
    <property type="match status" value="1"/>
</dbReference>
<dbReference type="PANTHER" id="PTHR33280">
    <property type="entry name" value="50S RIBOSOMAL PROTEIN L31, CHLOROPLASTIC"/>
    <property type="match status" value="1"/>
</dbReference>
<dbReference type="PANTHER" id="PTHR33280:SF6">
    <property type="entry name" value="LARGE RIBOSOMAL SUBUNIT PROTEIN BL31A"/>
    <property type="match status" value="1"/>
</dbReference>
<dbReference type="Pfam" id="PF01197">
    <property type="entry name" value="Ribosomal_L31"/>
    <property type="match status" value="1"/>
</dbReference>
<dbReference type="PRINTS" id="PR01249">
    <property type="entry name" value="RIBOSOMALL31"/>
</dbReference>
<dbReference type="SUPFAM" id="SSF143800">
    <property type="entry name" value="L28p-like"/>
    <property type="match status" value="1"/>
</dbReference>
<dbReference type="PROSITE" id="PS01143">
    <property type="entry name" value="RIBOSOMAL_L31"/>
    <property type="match status" value="1"/>
</dbReference>
<sequence>MKQNLHPKVNTVVFKDISCDFSFLGTSTLHSSETVKWEDGKEYPLIKVEISSASHPFFTGKQRVMDTEGRIDRFKKRYGKK</sequence>
<evidence type="ECO:0000255" key="1">
    <source>
        <dbReference type="HAMAP-Rule" id="MF_00502"/>
    </source>
</evidence>
<evidence type="ECO:0000305" key="2"/>
<protein>
    <recommendedName>
        <fullName evidence="1">Large ribosomal subunit protein bL31B</fullName>
    </recommendedName>
    <alternativeName>
        <fullName evidence="2">50S ribosomal protein L31 type B</fullName>
    </alternativeName>
</protein>
<organism>
    <name type="scientific">Bdellovibrio bacteriovorus (strain ATCC 15356 / DSM 50701 / NCIMB 9529 / HD100)</name>
    <dbReference type="NCBI Taxonomy" id="264462"/>
    <lineage>
        <taxon>Bacteria</taxon>
        <taxon>Pseudomonadati</taxon>
        <taxon>Bdellovibrionota</taxon>
        <taxon>Bdellovibrionia</taxon>
        <taxon>Bdellovibrionales</taxon>
        <taxon>Pseudobdellovibrionaceae</taxon>
        <taxon>Bdellovibrio</taxon>
    </lineage>
</organism>
<feature type="chain" id="PRO_0000173206" description="Large ribosomal subunit protein bL31B">
    <location>
        <begin position="1"/>
        <end position="81"/>
    </location>
</feature>
<proteinExistence type="inferred from homology"/>
<keyword id="KW-1185">Reference proteome</keyword>
<keyword id="KW-0687">Ribonucleoprotein</keyword>
<keyword id="KW-0689">Ribosomal protein</keyword>
<reference key="1">
    <citation type="journal article" date="2004" name="Science">
        <title>A predator unmasked: life cycle of Bdellovibrio bacteriovorus from a genomic perspective.</title>
        <authorList>
            <person name="Rendulic S."/>
            <person name="Jagtap P."/>
            <person name="Rosinus A."/>
            <person name="Eppinger M."/>
            <person name="Baar C."/>
            <person name="Lanz C."/>
            <person name="Keller H."/>
            <person name="Lambert C."/>
            <person name="Evans K.J."/>
            <person name="Goesmann A."/>
            <person name="Meyer F."/>
            <person name="Sockett R.E."/>
            <person name="Schuster S.C."/>
        </authorList>
    </citation>
    <scope>NUCLEOTIDE SEQUENCE [LARGE SCALE GENOMIC DNA]</scope>
    <source>
        <strain>ATCC 15356 / DSM 50701 / NCIMB 9529 / HD100</strain>
    </source>
</reference>
<gene>
    <name evidence="1" type="primary">rpmE2</name>
    <name type="synonym">rpmE</name>
    <name type="ordered locus">Bd0068</name>
</gene>
<accession>Q6MRL0</accession>
<name>RL31B_BDEBA</name>